<reference key="1">
    <citation type="journal article" date="2006" name="Proc. Natl. Acad. Sci. U.S.A.">
        <title>Comparative genomics of the lactic acid bacteria.</title>
        <authorList>
            <person name="Makarova K.S."/>
            <person name="Slesarev A."/>
            <person name="Wolf Y.I."/>
            <person name="Sorokin A."/>
            <person name="Mirkin B."/>
            <person name="Koonin E.V."/>
            <person name="Pavlov A."/>
            <person name="Pavlova N."/>
            <person name="Karamychev V."/>
            <person name="Polouchine N."/>
            <person name="Shakhova V."/>
            <person name="Grigoriev I."/>
            <person name="Lou Y."/>
            <person name="Rohksar D."/>
            <person name="Lucas S."/>
            <person name="Huang K."/>
            <person name="Goodstein D.M."/>
            <person name="Hawkins T."/>
            <person name="Plengvidhya V."/>
            <person name="Welker D."/>
            <person name="Hughes J."/>
            <person name="Goh Y."/>
            <person name="Benson A."/>
            <person name="Baldwin K."/>
            <person name="Lee J.-H."/>
            <person name="Diaz-Muniz I."/>
            <person name="Dosti B."/>
            <person name="Smeianov V."/>
            <person name="Wechter W."/>
            <person name="Barabote R."/>
            <person name="Lorca G."/>
            <person name="Altermann E."/>
            <person name="Barrangou R."/>
            <person name="Ganesan B."/>
            <person name="Xie Y."/>
            <person name="Rawsthorne H."/>
            <person name="Tamir D."/>
            <person name="Parker C."/>
            <person name="Breidt F."/>
            <person name="Broadbent J.R."/>
            <person name="Hutkins R."/>
            <person name="O'Sullivan D."/>
            <person name="Steele J."/>
            <person name="Unlu G."/>
            <person name="Saier M.H. Jr."/>
            <person name="Klaenhammer T."/>
            <person name="Richardson P."/>
            <person name="Kozyavkin S."/>
            <person name="Weimer B.C."/>
            <person name="Mills D.A."/>
        </authorList>
    </citation>
    <scope>NUCLEOTIDE SEQUENCE [LARGE SCALE GENOMIC DNA]</scope>
    <source>
        <strain>ATCC 367 / BCRC 12310 / CIP 105137 / JCM 1170 / LMG 11437 / NCIMB 947 / NCTC 947</strain>
    </source>
</reference>
<evidence type="ECO:0000255" key="1">
    <source>
        <dbReference type="HAMAP-Rule" id="MF_01453"/>
    </source>
</evidence>
<dbReference type="EC" id="3.1.-.-" evidence="1"/>
<dbReference type="EMBL" id="CP000416">
    <property type="protein sequence ID" value="ABJ65316.1"/>
    <property type="molecule type" value="Genomic_DNA"/>
</dbReference>
<dbReference type="RefSeq" id="WP_011668933.1">
    <property type="nucleotide sequence ID" value="NC_008497.1"/>
</dbReference>
<dbReference type="SMR" id="Q03NA6"/>
<dbReference type="STRING" id="387344.LVIS_2268"/>
<dbReference type="KEGG" id="lbr:LVIS_2268"/>
<dbReference type="PATRIC" id="fig|387344.15.peg.2172"/>
<dbReference type="eggNOG" id="COG3857">
    <property type="taxonomic scope" value="Bacteria"/>
</dbReference>
<dbReference type="HOGENOM" id="CLU_007838_0_0_9"/>
<dbReference type="Proteomes" id="UP000001652">
    <property type="component" value="Chromosome"/>
</dbReference>
<dbReference type="GO" id="GO:0008409">
    <property type="term" value="F:5'-3' exonuclease activity"/>
    <property type="evidence" value="ECO:0007669"/>
    <property type="project" value="UniProtKB-UniRule"/>
</dbReference>
<dbReference type="GO" id="GO:0005524">
    <property type="term" value="F:ATP binding"/>
    <property type="evidence" value="ECO:0007669"/>
    <property type="project" value="UniProtKB-UniRule"/>
</dbReference>
<dbReference type="GO" id="GO:0003690">
    <property type="term" value="F:double-stranded DNA binding"/>
    <property type="evidence" value="ECO:0007669"/>
    <property type="project" value="UniProtKB-UniRule"/>
</dbReference>
<dbReference type="GO" id="GO:0004386">
    <property type="term" value="F:helicase activity"/>
    <property type="evidence" value="ECO:0007669"/>
    <property type="project" value="UniProtKB-KW"/>
</dbReference>
<dbReference type="GO" id="GO:0016817">
    <property type="term" value="F:hydrolase activity, acting on acid anhydrides"/>
    <property type="evidence" value="ECO:0007669"/>
    <property type="project" value="InterPro"/>
</dbReference>
<dbReference type="GO" id="GO:0000724">
    <property type="term" value="P:double-strand break repair via homologous recombination"/>
    <property type="evidence" value="ECO:0007669"/>
    <property type="project" value="UniProtKB-UniRule"/>
</dbReference>
<dbReference type="Gene3D" id="3.40.50.300">
    <property type="entry name" value="P-loop containing nucleotide triphosphate hydrolases"/>
    <property type="match status" value="3"/>
</dbReference>
<dbReference type="HAMAP" id="MF_01453">
    <property type="entry name" value="AddB_type2"/>
    <property type="match status" value="1"/>
</dbReference>
<dbReference type="InterPro" id="IPR049035">
    <property type="entry name" value="ADDB_N"/>
</dbReference>
<dbReference type="InterPro" id="IPR014141">
    <property type="entry name" value="DNA_helicase_suRexB"/>
</dbReference>
<dbReference type="InterPro" id="IPR027417">
    <property type="entry name" value="P-loop_NTPase"/>
</dbReference>
<dbReference type="InterPro" id="IPR038726">
    <property type="entry name" value="PDDEXK_AddAB-type"/>
</dbReference>
<dbReference type="PANTHER" id="PTHR30591">
    <property type="entry name" value="RECBCD ENZYME SUBUNIT RECC"/>
    <property type="match status" value="1"/>
</dbReference>
<dbReference type="PANTHER" id="PTHR30591:SF1">
    <property type="entry name" value="RECBCD ENZYME SUBUNIT RECC"/>
    <property type="match status" value="1"/>
</dbReference>
<dbReference type="Pfam" id="PF21445">
    <property type="entry name" value="ADDB_N"/>
    <property type="match status" value="1"/>
</dbReference>
<dbReference type="Pfam" id="PF12705">
    <property type="entry name" value="PDDEXK_1"/>
    <property type="match status" value="1"/>
</dbReference>
<dbReference type="SUPFAM" id="SSF52540">
    <property type="entry name" value="P-loop containing nucleoside triphosphate hydrolases"/>
    <property type="match status" value="1"/>
</dbReference>
<protein>
    <recommendedName>
        <fullName evidence="1">ATP-dependent helicase/deoxyribonuclease subunit B</fullName>
        <ecNumber evidence="1">3.1.-.-</ecNumber>
    </recommendedName>
    <alternativeName>
        <fullName evidence="1">ATP-dependent helicase/nuclease subunit RexB</fullName>
    </alternativeName>
</protein>
<sequence length="1201" mass="135650">MSLQFILGSAGQDHRTPMVTALAQQVTAHPTDQSYYLVPNHIKFETEVDVLSALKEQIAPEQALFAQTQVQVFSFTRLAWFFMKNEPIYQLPRISPAGLNMLIYQIIQTHADELTIFRGEVDRPGFVSQLATQLAEFKVGQVTAADLMSAIEQLDTTNTDLQAKLHDLMIIYEAFETQMMGKFVENTDLLNQLATYLEQQVDLQHAHFYLEGFSQLSAQERQLVAILIQRSASVTVALNLDHGYPQKLPDKTTLFFQSAKLYQQLYMVAQANRVPVLIDQQAKTARVSADLQALDTYWQASQTLSPQPSAVEKPTHIQIVQAANRYVEVSRVATQIRQLVATGNYRYRDFLVLTRHLDAYQTVIDPIFQAQAVPYFDDADIRMADHPFVELLNALFDVQRRNYRYADVFRVLKSELLLPRDADGELMAVPAYRQALALTENFVLKNGLEGQHWWTQDKDWVYNRFAVGDGGVQTTRDDQISAQINRIRRFVKQTLPPFFARLKVAATYTDAAAVLYQFVANAGVSERLMTWRDQAIAAGDLTKAGQPEQTWAAFCDILDEFHTILGDLPTVLPDFQALLQAGFAGAKFSQIPSTLDQVVISESGIVQANNRKITFIMGATADTMPDNQIPTTLLADNDRQDLSARLQQVDDGTYLRDDAATQLAGEPYLNYLAFMSGSERLIFSYPAMSDDARSGLQLSPYVARIKDYFGLSIDIAAANPVAEDEAILPFVGTRRTTLRHLVQASHDSQLREVPLSRSWLYVLNLLRTDPTYGELTTKLLGSLSYRNVPTQLTPDIVTQLYGTKINTSISKLEEYYANPYAYFLKYGLNLQERDVFALSPASTGEFFHATLDGLMKLVNDQKLNLAALDDQQLREMTDEVMAKLLDTTENPQFAILESSHRMGYIRQQLMKTMRQMAKTLQEQSKRTKLRPKRTEVQFGLGDERGLAALSFDVGKRRQVTVRGRIDRLDAVQVKDKTYLGIVDYKSSEHKFSYQEAYYGRAMQMLTYLDAVKQNLPTLLDAPTAKDAELAGAVYLHLQNPILKAAEVLGEDPLTSLLKAEQYQGLLLDDPDLLTNLDTLFGTPDYSGSSLLFRGLRRTKTGKITSYGKLLVNSNELDLLLTHTERLIKRAATDIFDGRVDLAPFREQNRTALQYSPYKSVMQFDPLLKENNYRDLPSLNKDDVMARIAAEQEQEATDEHEI</sequence>
<organism>
    <name type="scientific">Levilactobacillus brevis (strain ATCC 367 / BCRC 12310 / CIP 105137 / JCM 1170 / LMG 11437 / NCIMB 947 / NCTC 947)</name>
    <name type="common">Lactobacillus brevis</name>
    <dbReference type="NCBI Taxonomy" id="387344"/>
    <lineage>
        <taxon>Bacteria</taxon>
        <taxon>Bacillati</taxon>
        <taxon>Bacillota</taxon>
        <taxon>Bacilli</taxon>
        <taxon>Lactobacillales</taxon>
        <taxon>Lactobacillaceae</taxon>
        <taxon>Levilactobacillus</taxon>
    </lineage>
</organism>
<proteinExistence type="inferred from homology"/>
<comment type="function">
    <text evidence="1">The heterodimer acts as both an ATP-dependent DNA helicase and an ATP-dependent, dual-direction single-stranded exonuclease. Recognizes the chi site generating a DNA molecule suitable for the initiation of homologous recombination. This subunit has 5' -&gt; 3' nuclease activity but not helicase activity.</text>
</comment>
<comment type="cofactor">
    <cofactor evidence="1">
        <name>Mg(2+)</name>
        <dbReference type="ChEBI" id="CHEBI:18420"/>
    </cofactor>
</comment>
<comment type="subunit">
    <text evidence="1">Heterodimer of AddA and RexB.</text>
</comment>
<comment type="miscellaneous">
    <text evidence="1">Despite having helicase-like domains, this subunit does not have helicase activity.</text>
</comment>
<comment type="similarity">
    <text evidence="1">Belongs to the helicase family. AddB/RexB type 2 subfamily.</text>
</comment>
<gene>
    <name evidence="1" type="primary">rexB</name>
    <name type="ordered locus">LVIS_2268</name>
</gene>
<name>ADDB_LEVBA</name>
<feature type="chain" id="PRO_0000379366" description="ATP-dependent helicase/deoxyribonuclease subunit B">
    <location>
        <begin position="1"/>
        <end position="1201"/>
    </location>
</feature>
<keyword id="KW-0067">ATP-binding</keyword>
<keyword id="KW-0227">DNA damage</keyword>
<keyword id="KW-0234">DNA repair</keyword>
<keyword id="KW-0238">DNA-binding</keyword>
<keyword id="KW-0269">Exonuclease</keyword>
<keyword id="KW-0347">Helicase</keyword>
<keyword id="KW-0378">Hydrolase</keyword>
<keyword id="KW-0540">Nuclease</keyword>
<keyword id="KW-0547">Nucleotide-binding</keyword>
<keyword id="KW-1185">Reference proteome</keyword>
<accession>Q03NA6</accession>